<sequence length="463" mass="53620">MAKDMDTIVSLAKHRGFVFPGSDIYGGLSNTWDYGPLGVELKNNVKKAWWQKFITQSPFNVGIDAAILMNPKVWEASGHLNNFNDPMIDNKDSKIRYRADKLIEDYMQDVKGDENFIADGLSFEQMKKIIDDEGIVCPVSKTANWTEIRQFNLMFKTFQGVTEDSTNEIFLRPETAQGIFVNYKNVQRSMRKKLPFGIGQIGKSFRNEITPGNFIFRTREFEQMELEFFCKPGEEIEWQNYWKTFASDWLTSLNMSSENMRLRDHDEDELSHYSNATTDIEYKFPFGWGELWGIASRTDFDLRKHAEHSGEDFRYHDPETNEKYIPYCIEPSLGADRVTLAFLCDAYDEEGVEGSKDARTVLHFHPALAPYKAAILPLSKKLSGEAIKIFEQLSSKFSIDFDESQSIGKRYRRQDEIGTPYCVTFDFDSLEDNQVTVRDRDSMEQVRMPISELEAFLTEKTKF</sequence>
<protein>
    <recommendedName>
        <fullName evidence="1">Glycine--tRNA ligase</fullName>
        <ecNumber evidence="1">6.1.1.14</ecNumber>
    </recommendedName>
    <alternativeName>
        <fullName evidence="1">Glycyl-tRNA synthetase</fullName>
        <shortName evidence="1">GlyRS</shortName>
    </alternativeName>
</protein>
<feature type="chain" id="PRO_0000072974" description="Glycine--tRNA ligase">
    <location>
        <begin position="1"/>
        <end position="463"/>
    </location>
</feature>
<feature type="binding site" evidence="1">
    <location>
        <position position="98"/>
    </location>
    <ligand>
        <name>substrate</name>
    </ligand>
</feature>
<feature type="binding site" evidence="1">
    <location>
        <position position="174"/>
    </location>
    <ligand>
        <name>substrate</name>
    </ligand>
</feature>
<feature type="binding site" evidence="1">
    <location>
        <begin position="206"/>
        <end position="208"/>
    </location>
    <ligand>
        <name>ATP</name>
        <dbReference type="ChEBI" id="CHEBI:30616"/>
    </ligand>
</feature>
<feature type="binding site" evidence="1">
    <location>
        <begin position="216"/>
        <end position="221"/>
    </location>
    <ligand>
        <name>ATP</name>
        <dbReference type="ChEBI" id="CHEBI:30616"/>
    </ligand>
</feature>
<feature type="binding site" evidence="1">
    <location>
        <begin position="221"/>
        <end position="225"/>
    </location>
    <ligand>
        <name>substrate</name>
    </ligand>
</feature>
<feature type="binding site" evidence="1">
    <location>
        <begin position="290"/>
        <end position="291"/>
    </location>
    <ligand>
        <name>ATP</name>
        <dbReference type="ChEBI" id="CHEBI:30616"/>
    </ligand>
</feature>
<feature type="binding site" evidence="1">
    <location>
        <begin position="330"/>
        <end position="334"/>
    </location>
    <ligand>
        <name>substrate</name>
    </ligand>
</feature>
<feature type="binding site" evidence="1">
    <location>
        <begin position="334"/>
        <end position="337"/>
    </location>
    <ligand>
        <name>ATP</name>
        <dbReference type="ChEBI" id="CHEBI:30616"/>
    </ligand>
</feature>
<reference key="1">
    <citation type="journal article" date="2001" name="Lancet">
        <title>Whole genome sequencing of meticillin-resistant Staphylococcus aureus.</title>
        <authorList>
            <person name="Kuroda M."/>
            <person name="Ohta T."/>
            <person name="Uchiyama I."/>
            <person name="Baba T."/>
            <person name="Yuzawa H."/>
            <person name="Kobayashi I."/>
            <person name="Cui L."/>
            <person name="Oguchi A."/>
            <person name="Aoki K."/>
            <person name="Nagai Y."/>
            <person name="Lian J.-Q."/>
            <person name="Ito T."/>
            <person name="Kanamori M."/>
            <person name="Matsumaru H."/>
            <person name="Maruyama A."/>
            <person name="Murakami H."/>
            <person name="Hosoyama A."/>
            <person name="Mizutani-Ui Y."/>
            <person name="Takahashi N.K."/>
            <person name="Sawano T."/>
            <person name="Inoue R."/>
            <person name="Kaito C."/>
            <person name="Sekimizu K."/>
            <person name="Hirakawa H."/>
            <person name="Kuhara S."/>
            <person name="Goto S."/>
            <person name="Yabuzaki J."/>
            <person name="Kanehisa M."/>
            <person name="Yamashita A."/>
            <person name="Oshima K."/>
            <person name="Furuya K."/>
            <person name="Yoshino C."/>
            <person name="Shiba T."/>
            <person name="Hattori M."/>
            <person name="Ogasawara N."/>
            <person name="Hayashi H."/>
            <person name="Hiramatsu K."/>
        </authorList>
    </citation>
    <scope>NUCLEOTIDE SEQUENCE [LARGE SCALE GENOMIC DNA]</scope>
    <source>
        <strain>N315</strain>
    </source>
</reference>
<reference key="2">
    <citation type="journal article" date="2005" name="J. Microbiol. Methods">
        <title>Correlation of proteomic and transcriptomic profiles of Staphylococcus aureus during the post-exponential phase of growth.</title>
        <authorList>
            <person name="Scherl A."/>
            <person name="Francois P."/>
            <person name="Bento M."/>
            <person name="Deshusses J.M."/>
            <person name="Charbonnier Y."/>
            <person name="Converset V."/>
            <person name="Huyghe A."/>
            <person name="Walter N."/>
            <person name="Hoogland C."/>
            <person name="Appel R.D."/>
            <person name="Sanchez J.-C."/>
            <person name="Zimmermann-Ivol C.G."/>
            <person name="Corthals G.L."/>
            <person name="Hochstrasser D.F."/>
            <person name="Schrenzel J."/>
        </authorList>
    </citation>
    <scope>IDENTIFICATION BY MASS SPECTROMETRY</scope>
    <source>
        <strain>N315</strain>
    </source>
</reference>
<reference key="3">
    <citation type="submission" date="2007-10" db="UniProtKB">
        <title>Shotgun proteomic analysis of total and membrane protein extracts of S. aureus strain N315.</title>
        <authorList>
            <person name="Vaezzadeh A.R."/>
            <person name="Deshusses J."/>
            <person name="Lescuyer P."/>
            <person name="Hochstrasser D.F."/>
        </authorList>
    </citation>
    <scope>IDENTIFICATION BY MASS SPECTROMETRY [LARGE SCALE ANALYSIS]</scope>
    <source>
        <strain>N315</strain>
    </source>
</reference>
<accession>P99129</accession>
<accession>Q99TT1</accession>
<name>SYG_STAAN</name>
<proteinExistence type="evidence at protein level"/>
<organism>
    <name type="scientific">Staphylococcus aureus (strain N315)</name>
    <dbReference type="NCBI Taxonomy" id="158879"/>
    <lineage>
        <taxon>Bacteria</taxon>
        <taxon>Bacillati</taxon>
        <taxon>Bacillota</taxon>
        <taxon>Bacilli</taxon>
        <taxon>Bacillales</taxon>
        <taxon>Staphylococcaceae</taxon>
        <taxon>Staphylococcus</taxon>
    </lineage>
</organism>
<evidence type="ECO:0000255" key="1">
    <source>
        <dbReference type="HAMAP-Rule" id="MF_00253"/>
    </source>
</evidence>
<comment type="function">
    <text evidence="1">Catalyzes the attachment of glycine to tRNA(Gly).</text>
</comment>
<comment type="catalytic activity">
    <reaction evidence="1">
        <text>tRNA(Gly) + glycine + ATP = glycyl-tRNA(Gly) + AMP + diphosphate</text>
        <dbReference type="Rhea" id="RHEA:16013"/>
        <dbReference type="Rhea" id="RHEA-COMP:9664"/>
        <dbReference type="Rhea" id="RHEA-COMP:9683"/>
        <dbReference type="ChEBI" id="CHEBI:30616"/>
        <dbReference type="ChEBI" id="CHEBI:33019"/>
        <dbReference type="ChEBI" id="CHEBI:57305"/>
        <dbReference type="ChEBI" id="CHEBI:78442"/>
        <dbReference type="ChEBI" id="CHEBI:78522"/>
        <dbReference type="ChEBI" id="CHEBI:456215"/>
        <dbReference type="EC" id="6.1.1.14"/>
    </reaction>
</comment>
<comment type="subunit">
    <text evidence="1">Homodimer.</text>
</comment>
<comment type="subcellular location">
    <subcellularLocation>
        <location evidence="1">Cytoplasm</location>
    </subcellularLocation>
</comment>
<comment type="similarity">
    <text evidence="1">Belongs to the class-II aminoacyl-tRNA synthetase family.</text>
</comment>
<keyword id="KW-0030">Aminoacyl-tRNA synthetase</keyword>
<keyword id="KW-0067">ATP-binding</keyword>
<keyword id="KW-0963">Cytoplasm</keyword>
<keyword id="KW-0436">Ligase</keyword>
<keyword id="KW-0547">Nucleotide-binding</keyword>
<keyword id="KW-0648">Protein biosynthesis</keyword>
<dbReference type="EC" id="6.1.1.14" evidence="1"/>
<dbReference type="EMBL" id="BA000018">
    <property type="protein sequence ID" value="BAB42657.1"/>
    <property type="molecule type" value="Genomic_DNA"/>
</dbReference>
<dbReference type="PIR" id="D89937">
    <property type="entry name" value="D89937"/>
</dbReference>
<dbReference type="RefSeq" id="WP_001030080.1">
    <property type="nucleotide sequence ID" value="NC_002745.2"/>
</dbReference>
<dbReference type="SMR" id="P99129"/>
<dbReference type="EnsemblBacteria" id="BAB42657">
    <property type="protein sequence ID" value="BAB42657"/>
    <property type="gene ID" value="BAB42657"/>
</dbReference>
<dbReference type="KEGG" id="sau:SA1394"/>
<dbReference type="HOGENOM" id="CLU_015515_2_1_9"/>
<dbReference type="GO" id="GO:0005737">
    <property type="term" value="C:cytoplasm"/>
    <property type="evidence" value="ECO:0007669"/>
    <property type="project" value="UniProtKB-SubCell"/>
</dbReference>
<dbReference type="GO" id="GO:0005524">
    <property type="term" value="F:ATP binding"/>
    <property type="evidence" value="ECO:0007669"/>
    <property type="project" value="UniProtKB-UniRule"/>
</dbReference>
<dbReference type="GO" id="GO:0140096">
    <property type="term" value="F:catalytic activity, acting on a protein"/>
    <property type="evidence" value="ECO:0007669"/>
    <property type="project" value="UniProtKB-ARBA"/>
</dbReference>
<dbReference type="GO" id="GO:0004820">
    <property type="term" value="F:glycine-tRNA ligase activity"/>
    <property type="evidence" value="ECO:0000250"/>
    <property type="project" value="UniProtKB"/>
</dbReference>
<dbReference type="GO" id="GO:0046983">
    <property type="term" value="F:protein dimerization activity"/>
    <property type="evidence" value="ECO:0000250"/>
    <property type="project" value="UniProtKB"/>
</dbReference>
<dbReference type="GO" id="GO:0016740">
    <property type="term" value="F:transferase activity"/>
    <property type="evidence" value="ECO:0007669"/>
    <property type="project" value="UniProtKB-ARBA"/>
</dbReference>
<dbReference type="GO" id="GO:0006426">
    <property type="term" value="P:glycyl-tRNA aminoacylation"/>
    <property type="evidence" value="ECO:0007669"/>
    <property type="project" value="UniProtKB-UniRule"/>
</dbReference>
<dbReference type="CDD" id="cd00774">
    <property type="entry name" value="GlyRS-like_core"/>
    <property type="match status" value="1"/>
</dbReference>
<dbReference type="CDD" id="cd00858">
    <property type="entry name" value="GlyRS_anticodon"/>
    <property type="match status" value="1"/>
</dbReference>
<dbReference type="FunFam" id="3.40.50.800:FF:000002">
    <property type="entry name" value="Glycine--tRNA ligase"/>
    <property type="match status" value="1"/>
</dbReference>
<dbReference type="Gene3D" id="3.30.40.230">
    <property type="match status" value="1"/>
</dbReference>
<dbReference type="Gene3D" id="3.40.50.800">
    <property type="entry name" value="Anticodon-binding domain"/>
    <property type="match status" value="1"/>
</dbReference>
<dbReference type="Gene3D" id="3.30.930.10">
    <property type="entry name" value="Bira Bifunctional Protein, Domain 2"/>
    <property type="match status" value="1"/>
</dbReference>
<dbReference type="HAMAP" id="MF_00253_B">
    <property type="entry name" value="Gly_tRNA_synth_B"/>
    <property type="match status" value="1"/>
</dbReference>
<dbReference type="InterPro" id="IPR002314">
    <property type="entry name" value="aa-tRNA-synt_IIb"/>
</dbReference>
<dbReference type="InterPro" id="IPR006195">
    <property type="entry name" value="aa-tRNA-synth_II"/>
</dbReference>
<dbReference type="InterPro" id="IPR045864">
    <property type="entry name" value="aa-tRNA-synth_II/BPL/LPL"/>
</dbReference>
<dbReference type="InterPro" id="IPR004154">
    <property type="entry name" value="Anticodon-bd"/>
</dbReference>
<dbReference type="InterPro" id="IPR036621">
    <property type="entry name" value="Anticodon-bd_dom_sf"/>
</dbReference>
<dbReference type="InterPro" id="IPR027031">
    <property type="entry name" value="Gly-tRNA_synthase/POLG2"/>
</dbReference>
<dbReference type="InterPro" id="IPR022961">
    <property type="entry name" value="Gly_tRNA_ligase_bac"/>
</dbReference>
<dbReference type="InterPro" id="IPR033731">
    <property type="entry name" value="GlyRS-like_core"/>
</dbReference>
<dbReference type="InterPro" id="IPR002315">
    <property type="entry name" value="tRNA-synt_gly"/>
</dbReference>
<dbReference type="NCBIfam" id="TIGR00389">
    <property type="entry name" value="glyS_dimeric"/>
    <property type="match status" value="1"/>
</dbReference>
<dbReference type="NCBIfam" id="NF003211">
    <property type="entry name" value="PRK04173.1"/>
    <property type="match status" value="1"/>
</dbReference>
<dbReference type="PANTHER" id="PTHR10745:SF8">
    <property type="entry name" value="DNA POLYMERASE SUBUNIT GAMMA-2, MITOCHONDRIAL"/>
    <property type="match status" value="1"/>
</dbReference>
<dbReference type="PANTHER" id="PTHR10745">
    <property type="entry name" value="GLYCYL-TRNA SYNTHETASE/DNA POLYMERASE SUBUNIT GAMMA-2"/>
    <property type="match status" value="1"/>
</dbReference>
<dbReference type="Pfam" id="PF03129">
    <property type="entry name" value="HGTP_anticodon"/>
    <property type="match status" value="1"/>
</dbReference>
<dbReference type="Pfam" id="PF00587">
    <property type="entry name" value="tRNA-synt_2b"/>
    <property type="match status" value="1"/>
</dbReference>
<dbReference type="PRINTS" id="PR01043">
    <property type="entry name" value="TRNASYNTHGLY"/>
</dbReference>
<dbReference type="SUPFAM" id="SSF52954">
    <property type="entry name" value="Class II aaRS ABD-related"/>
    <property type="match status" value="1"/>
</dbReference>
<dbReference type="SUPFAM" id="SSF55681">
    <property type="entry name" value="Class II aaRS and biotin synthetases"/>
    <property type="match status" value="1"/>
</dbReference>
<dbReference type="PROSITE" id="PS50862">
    <property type="entry name" value="AA_TRNA_LIGASE_II"/>
    <property type="match status" value="1"/>
</dbReference>
<gene>
    <name evidence="1" type="primary">glyQS</name>
    <name type="ordered locus">SA1394</name>
</gene>